<gene>
    <name evidence="1" type="primary">rpoZ</name>
    <name type="ordered locus">Hac_0637</name>
</gene>
<keyword id="KW-0240">DNA-directed RNA polymerase</keyword>
<keyword id="KW-0548">Nucleotidyltransferase</keyword>
<keyword id="KW-0804">Transcription</keyword>
<keyword id="KW-0808">Transferase</keyword>
<organism>
    <name type="scientific">Helicobacter acinonychis (strain Sheeba)</name>
    <dbReference type="NCBI Taxonomy" id="382638"/>
    <lineage>
        <taxon>Bacteria</taxon>
        <taxon>Pseudomonadati</taxon>
        <taxon>Campylobacterota</taxon>
        <taxon>Epsilonproteobacteria</taxon>
        <taxon>Campylobacterales</taxon>
        <taxon>Helicobacteraceae</taxon>
        <taxon>Helicobacter</taxon>
    </lineage>
</organism>
<feature type="chain" id="PRO_1000005938" description="DNA-directed RNA polymerase subunit omega">
    <location>
        <begin position="1"/>
        <end position="74"/>
    </location>
</feature>
<protein>
    <recommendedName>
        <fullName evidence="1">DNA-directed RNA polymerase subunit omega</fullName>
        <shortName evidence="1">RNAP omega subunit</shortName>
        <ecNumber evidence="1">2.7.7.6</ecNumber>
    </recommendedName>
    <alternativeName>
        <fullName evidence="1">RNA polymerase omega subunit</fullName>
    </alternativeName>
    <alternativeName>
        <fullName evidence="1">Transcriptase subunit omega</fullName>
    </alternativeName>
</protein>
<dbReference type="EC" id="2.7.7.6" evidence="1"/>
<dbReference type="EMBL" id="AM260522">
    <property type="protein sequence ID" value="CAJ99444.1"/>
    <property type="molecule type" value="Genomic_DNA"/>
</dbReference>
<dbReference type="RefSeq" id="WP_000712202.1">
    <property type="nucleotide sequence ID" value="NC_008229.1"/>
</dbReference>
<dbReference type="SMR" id="Q17Y32"/>
<dbReference type="STRING" id="382638.Hac_0637"/>
<dbReference type="KEGG" id="hac:Hac_0637"/>
<dbReference type="eggNOG" id="COG1758">
    <property type="taxonomic scope" value="Bacteria"/>
</dbReference>
<dbReference type="HOGENOM" id="CLU_125406_3_0_7"/>
<dbReference type="OrthoDB" id="5334728at2"/>
<dbReference type="BioCyc" id="HACI382638:HAC_RS02785-MONOMER"/>
<dbReference type="Proteomes" id="UP000000775">
    <property type="component" value="Chromosome"/>
</dbReference>
<dbReference type="GO" id="GO:0000428">
    <property type="term" value="C:DNA-directed RNA polymerase complex"/>
    <property type="evidence" value="ECO:0007669"/>
    <property type="project" value="UniProtKB-KW"/>
</dbReference>
<dbReference type="GO" id="GO:0003677">
    <property type="term" value="F:DNA binding"/>
    <property type="evidence" value="ECO:0007669"/>
    <property type="project" value="UniProtKB-UniRule"/>
</dbReference>
<dbReference type="GO" id="GO:0003899">
    <property type="term" value="F:DNA-directed RNA polymerase activity"/>
    <property type="evidence" value="ECO:0007669"/>
    <property type="project" value="UniProtKB-UniRule"/>
</dbReference>
<dbReference type="GO" id="GO:0006351">
    <property type="term" value="P:DNA-templated transcription"/>
    <property type="evidence" value="ECO:0007669"/>
    <property type="project" value="UniProtKB-UniRule"/>
</dbReference>
<dbReference type="Gene3D" id="3.90.940.10">
    <property type="match status" value="1"/>
</dbReference>
<dbReference type="HAMAP" id="MF_00366">
    <property type="entry name" value="RNApol_bact_RpoZ"/>
    <property type="match status" value="1"/>
</dbReference>
<dbReference type="InterPro" id="IPR003716">
    <property type="entry name" value="DNA-dir_RNA_pol_omega"/>
</dbReference>
<dbReference type="InterPro" id="IPR006110">
    <property type="entry name" value="Pol_omega/Rpo6/RPB6"/>
</dbReference>
<dbReference type="InterPro" id="IPR036161">
    <property type="entry name" value="RPB6/omega-like_sf"/>
</dbReference>
<dbReference type="NCBIfam" id="NF001579">
    <property type="entry name" value="PRK00392.6-2"/>
    <property type="match status" value="1"/>
</dbReference>
<dbReference type="NCBIfam" id="TIGR00690">
    <property type="entry name" value="rpoZ"/>
    <property type="match status" value="1"/>
</dbReference>
<dbReference type="Pfam" id="PF01192">
    <property type="entry name" value="RNA_pol_Rpb6"/>
    <property type="match status" value="1"/>
</dbReference>
<dbReference type="SMART" id="SM01409">
    <property type="entry name" value="RNA_pol_Rpb6"/>
    <property type="match status" value="1"/>
</dbReference>
<dbReference type="SUPFAM" id="SSF63562">
    <property type="entry name" value="RPB6/omega subunit-like"/>
    <property type="match status" value="1"/>
</dbReference>
<proteinExistence type="inferred from homology"/>
<name>RPOZ_HELAH</name>
<reference key="1">
    <citation type="journal article" date="2006" name="PLoS Genet.">
        <title>Who ate whom? Adaptive Helicobacter genomic changes that accompanied a host jump from early humans to large felines.</title>
        <authorList>
            <person name="Eppinger M."/>
            <person name="Baar C."/>
            <person name="Linz B."/>
            <person name="Raddatz G."/>
            <person name="Lanz C."/>
            <person name="Keller H."/>
            <person name="Morelli G."/>
            <person name="Gressmann H."/>
            <person name="Achtman M."/>
            <person name="Schuster S.C."/>
        </authorList>
    </citation>
    <scope>NUCLEOTIDE SEQUENCE [LARGE SCALE GENOMIC DNA]</scope>
    <source>
        <strain>Sheeba</strain>
    </source>
</reference>
<comment type="function">
    <text evidence="1">Promotes RNA polymerase assembly. Latches the N- and C-terminal regions of the beta' subunit thereby facilitating its interaction with the beta and alpha subunits.</text>
</comment>
<comment type="catalytic activity">
    <reaction evidence="1">
        <text>RNA(n) + a ribonucleoside 5'-triphosphate = RNA(n+1) + diphosphate</text>
        <dbReference type="Rhea" id="RHEA:21248"/>
        <dbReference type="Rhea" id="RHEA-COMP:14527"/>
        <dbReference type="Rhea" id="RHEA-COMP:17342"/>
        <dbReference type="ChEBI" id="CHEBI:33019"/>
        <dbReference type="ChEBI" id="CHEBI:61557"/>
        <dbReference type="ChEBI" id="CHEBI:140395"/>
        <dbReference type="EC" id="2.7.7.6"/>
    </reaction>
</comment>
<comment type="subunit">
    <text evidence="1">The RNAP catalytic core consists of 2 alpha, 1 beta, 1 beta' and 1 omega subunit. When a sigma factor is associated with the core the holoenzyme is formed, which can initiate transcription.</text>
</comment>
<comment type="similarity">
    <text evidence="1">Belongs to the RNA polymerase subunit omega family.</text>
</comment>
<accession>Q17Y32</accession>
<evidence type="ECO:0000255" key="1">
    <source>
        <dbReference type="HAMAP-Rule" id="MF_00366"/>
    </source>
</evidence>
<sequence>MKKERTESLVAQALKNIGNDRYMLDNLVFARVKQLNAGAKTLVNMDPKRHKLVDIAIREIAEGKIDIDRIDERN</sequence>